<reference key="1">
    <citation type="journal article" date="1998" name="Science">
        <title>Genome sequence of the nematode C. elegans: a platform for investigating biology.</title>
        <authorList>
            <consortium name="The C. elegans sequencing consortium"/>
        </authorList>
    </citation>
    <scope>NUCLEOTIDE SEQUENCE [LARGE SCALE GENOMIC DNA]</scope>
    <source>
        <strain>Bristol N2</strain>
    </source>
</reference>
<dbReference type="EMBL" id="FO080320">
    <property type="protein sequence ID" value="CCD62842.1"/>
    <property type="molecule type" value="Genomic_DNA"/>
</dbReference>
<dbReference type="PIR" id="T15401">
    <property type="entry name" value="T15401"/>
</dbReference>
<dbReference type="RefSeq" id="NP_001021909.1">
    <property type="nucleotide sequence ID" value="NM_001026738.7"/>
</dbReference>
<dbReference type="SMR" id="Q09445"/>
<dbReference type="FunCoup" id="Q09445">
    <property type="interactions" value="473"/>
</dbReference>
<dbReference type="STRING" id="6239.C04A2.1.1"/>
<dbReference type="PaxDb" id="6239-C04A2.1.1"/>
<dbReference type="EnsemblMetazoa" id="C04A2.1.1">
    <property type="protein sequence ID" value="C04A2.1.1"/>
    <property type="gene ID" value="WBGene00015410"/>
</dbReference>
<dbReference type="EnsemblMetazoa" id="C04A2.1.2">
    <property type="protein sequence ID" value="C04A2.1.2"/>
    <property type="gene ID" value="WBGene00015410"/>
</dbReference>
<dbReference type="GeneID" id="182185"/>
<dbReference type="KEGG" id="cel:CELE_C04A2.1"/>
<dbReference type="UCSC" id="C04A2.1.1">
    <property type="organism name" value="c. elegans"/>
</dbReference>
<dbReference type="AGR" id="WB:WBGene00015410"/>
<dbReference type="CTD" id="182185"/>
<dbReference type="WormBase" id="C04A2.1">
    <property type="protein sequence ID" value="CE36523"/>
    <property type="gene ID" value="WBGene00015410"/>
    <property type="gene designation" value="tbc-6"/>
</dbReference>
<dbReference type="eggNOG" id="KOG2058">
    <property type="taxonomic scope" value="Eukaryota"/>
</dbReference>
<dbReference type="GeneTree" id="ENSGT00940000172413"/>
<dbReference type="HOGENOM" id="CLU_005350_1_0_1"/>
<dbReference type="InParanoid" id="Q09445"/>
<dbReference type="OMA" id="YVFNFYP"/>
<dbReference type="OrthoDB" id="294251at2759"/>
<dbReference type="PhylomeDB" id="Q09445"/>
<dbReference type="PRO" id="PR:Q09445"/>
<dbReference type="Proteomes" id="UP000001940">
    <property type="component" value="Chromosome II"/>
</dbReference>
<dbReference type="Bgee" id="WBGene00015410">
    <property type="expression patterns" value="Expressed in material anatomical entity and 5 other cell types or tissues"/>
</dbReference>
<dbReference type="GO" id="GO:0005096">
    <property type="term" value="F:GTPase activator activity"/>
    <property type="evidence" value="ECO:0000318"/>
    <property type="project" value="GO_Central"/>
</dbReference>
<dbReference type="FunFam" id="1.10.8.270:FF:000053">
    <property type="entry name" value="TBC domain containing protein"/>
    <property type="match status" value="1"/>
</dbReference>
<dbReference type="Gene3D" id="1.10.8.270">
    <property type="entry name" value="putative rabgap domain of human tbc1 domain family member 14 like domains"/>
    <property type="match status" value="1"/>
</dbReference>
<dbReference type="Gene3D" id="1.10.10.750">
    <property type="entry name" value="Ypt/Rab-GAP domain of gyp1p, domain 1"/>
    <property type="match status" value="1"/>
</dbReference>
<dbReference type="Gene3D" id="1.10.472.80">
    <property type="entry name" value="Ypt/Rab-GAP domain of gyp1p, domain 3"/>
    <property type="match status" value="1"/>
</dbReference>
<dbReference type="InterPro" id="IPR000195">
    <property type="entry name" value="Rab-GAP-TBC_dom"/>
</dbReference>
<dbReference type="InterPro" id="IPR035969">
    <property type="entry name" value="Rab-GAP_TBC_sf"/>
</dbReference>
<dbReference type="InterPro" id="IPR050302">
    <property type="entry name" value="Rab_GAP_TBC_domain"/>
</dbReference>
<dbReference type="PANTHER" id="PTHR47219">
    <property type="entry name" value="RAB GTPASE-ACTIVATING PROTEIN 1-LIKE"/>
    <property type="match status" value="1"/>
</dbReference>
<dbReference type="PANTHER" id="PTHR47219:SF20">
    <property type="entry name" value="TBC1 DOMAIN FAMILY MEMBER 2B"/>
    <property type="match status" value="1"/>
</dbReference>
<dbReference type="Pfam" id="PF00566">
    <property type="entry name" value="RabGAP-TBC"/>
    <property type="match status" value="1"/>
</dbReference>
<dbReference type="SMART" id="SM00164">
    <property type="entry name" value="TBC"/>
    <property type="match status" value="1"/>
</dbReference>
<dbReference type="SUPFAM" id="SSF47923">
    <property type="entry name" value="Ypt/Rab-GAP domain of gyp1p"/>
    <property type="match status" value="2"/>
</dbReference>
<dbReference type="PROSITE" id="PS50086">
    <property type="entry name" value="TBC_RABGAP"/>
    <property type="match status" value="1"/>
</dbReference>
<protein>
    <recommendedName>
        <fullName>Growth hormone-regulated TBC protein 6</fullName>
    </recommendedName>
    <alternativeName>
        <fullName>TBC1 domain family member 6</fullName>
    </alternativeName>
</protein>
<name>GRTP6_CAEEL</name>
<proteinExistence type="predicted"/>
<sequence length="330" mass="38367">MYVFNFYPIPRKSINFRSDVDDLGFLRPWSPQEESGCKKQYEAWYSSYLPIVVRRRCRWEKENPRRNSHLLQRFVRKGIPHTFRKELWLRSCPSRADGVWQRHEVPDEVIKQIKLDLPRTFPDNKFLKTEGTRKTLGRALFAVAEHIPSVGYCQGLNFVAGVILLVVNDESRAIDLLVHLVSQRQEYYGKNMIGLRRDMHVLHSLLREHCPRVVVTLEKLDVGLDMLVGKWFVCWFVESLPMETVLRLWDCLIYEGDEWLFRIAVALFRSNMIAISSCESIDQLMTEVQNIGTSKAALYCHQLILKSAALSITNKSIEALRADAELAIPE</sequence>
<evidence type="ECO:0000255" key="1">
    <source>
        <dbReference type="PROSITE-ProRule" id="PRU00163"/>
    </source>
</evidence>
<gene>
    <name type="primary">tbc-6</name>
    <name type="ORF">C04A2.1</name>
</gene>
<accession>Q09445</accession>
<accession>Q7JPJ1</accession>
<keyword id="KW-1185">Reference proteome</keyword>
<feature type="chain" id="PRO_0000208058" description="Growth hormone-regulated TBC protein 6">
    <location>
        <begin position="1"/>
        <end position="330"/>
    </location>
</feature>
<feature type="domain" description="Rab-GAP TBC" evidence="1">
    <location>
        <begin position="78"/>
        <end position="256"/>
    </location>
</feature>
<organism>
    <name type="scientific">Caenorhabditis elegans</name>
    <dbReference type="NCBI Taxonomy" id="6239"/>
    <lineage>
        <taxon>Eukaryota</taxon>
        <taxon>Metazoa</taxon>
        <taxon>Ecdysozoa</taxon>
        <taxon>Nematoda</taxon>
        <taxon>Chromadorea</taxon>
        <taxon>Rhabditida</taxon>
        <taxon>Rhabditina</taxon>
        <taxon>Rhabditomorpha</taxon>
        <taxon>Rhabditoidea</taxon>
        <taxon>Rhabditidae</taxon>
        <taxon>Peloderinae</taxon>
        <taxon>Caenorhabditis</taxon>
    </lineage>
</organism>